<keyword id="KW-1185">Reference proteome</keyword>
<keyword id="KW-0687">Ribonucleoprotein</keyword>
<keyword id="KW-0689">Ribosomal protein</keyword>
<keyword id="KW-0694">RNA-binding</keyword>
<keyword id="KW-0699">rRNA-binding</keyword>
<evidence type="ECO:0000255" key="1">
    <source>
        <dbReference type="HAMAP-Rule" id="MF_01343"/>
    </source>
</evidence>
<evidence type="ECO:0000305" key="2"/>
<reference key="1">
    <citation type="journal article" date="2008" name="J. Bacteriol.">
        <title>Complete genome sequence of uropathogenic Proteus mirabilis, a master of both adherence and motility.</title>
        <authorList>
            <person name="Pearson M.M."/>
            <person name="Sebaihia M."/>
            <person name="Churcher C."/>
            <person name="Quail M.A."/>
            <person name="Seshasayee A.S."/>
            <person name="Luscombe N.M."/>
            <person name="Abdellah Z."/>
            <person name="Arrosmith C."/>
            <person name="Atkin B."/>
            <person name="Chillingworth T."/>
            <person name="Hauser H."/>
            <person name="Jagels K."/>
            <person name="Moule S."/>
            <person name="Mungall K."/>
            <person name="Norbertczak H."/>
            <person name="Rabbinowitsch E."/>
            <person name="Walker D."/>
            <person name="Whithead S."/>
            <person name="Thomson N.R."/>
            <person name="Rather P.N."/>
            <person name="Parkhill J."/>
            <person name="Mobley H.L.T."/>
        </authorList>
    </citation>
    <scope>NUCLEOTIDE SEQUENCE [LARGE SCALE GENOMIC DNA]</scope>
    <source>
        <strain>HI4320</strain>
    </source>
</reference>
<proteinExistence type="inferred from homology"/>
<organism>
    <name type="scientific">Proteus mirabilis (strain HI4320)</name>
    <dbReference type="NCBI Taxonomy" id="529507"/>
    <lineage>
        <taxon>Bacteria</taxon>
        <taxon>Pseudomonadati</taxon>
        <taxon>Pseudomonadota</taxon>
        <taxon>Gammaproteobacteria</taxon>
        <taxon>Enterobacterales</taxon>
        <taxon>Morganellaceae</taxon>
        <taxon>Proteus</taxon>
    </lineage>
</organism>
<gene>
    <name evidence="1" type="primary">rpsO</name>
    <name type="ordered locus">PMI3421</name>
</gene>
<accession>B4F2C2</accession>
<name>RS15_PROMH</name>
<feature type="chain" id="PRO_1000143154" description="Small ribosomal subunit protein uS15">
    <location>
        <begin position="1"/>
        <end position="89"/>
    </location>
</feature>
<sequence>MSLSTEAKAKIVAEFGRDANDTGSSEVQIALLTAEINHLQGHFSEHKKDHHSRRGLLRKVSSRRNLLDYLKRKDVARYTALIERLGLRR</sequence>
<dbReference type="EMBL" id="AM942759">
    <property type="protein sequence ID" value="CAR46709.1"/>
    <property type="molecule type" value="Genomic_DNA"/>
</dbReference>
<dbReference type="RefSeq" id="WP_004253005.1">
    <property type="nucleotide sequence ID" value="NC_010554.1"/>
</dbReference>
<dbReference type="SMR" id="B4F2C2"/>
<dbReference type="EnsemblBacteria" id="CAR46709">
    <property type="protein sequence ID" value="CAR46709"/>
    <property type="gene ID" value="PMI3421"/>
</dbReference>
<dbReference type="GeneID" id="6801141"/>
<dbReference type="KEGG" id="pmr:PMI3421"/>
<dbReference type="eggNOG" id="COG0184">
    <property type="taxonomic scope" value="Bacteria"/>
</dbReference>
<dbReference type="HOGENOM" id="CLU_148518_0_0_6"/>
<dbReference type="Proteomes" id="UP000008319">
    <property type="component" value="Chromosome"/>
</dbReference>
<dbReference type="GO" id="GO:0022627">
    <property type="term" value="C:cytosolic small ribosomal subunit"/>
    <property type="evidence" value="ECO:0007669"/>
    <property type="project" value="TreeGrafter"/>
</dbReference>
<dbReference type="GO" id="GO:0019843">
    <property type="term" value="F:rRNA binding"/>
    <property type="evidence" value="ECO:0007669"/>
    <property type="project" value="UniProtKB-UniRule"/>
</dbReference>
<dbReference type="GO" id="GO:0003735">
    <property type="term" value="F:structural constituent of ribosome"/>
    <property type="evidence" value="ECO:0007669"/>
    <property type="project" value="InterPro"/>
</dbReference>
<dbReference type="GO" id="GO:0006412">
    <property type="term" value="P:translation"/>
    <property type="evidence" value="ECO:0007669"/>
    <property type="project" value="UniProtKB-UniRule"/>
</dbReference>
<dbReference type="CDD" id="cd00353">
    <property type="entry name" value="Ribosomal_S15p_S13e"/>
    <property type="match status" value="1"/>
</dbReference>
<dbReference type="FunFam" id="1.10.287.10:FF:000002">
    <property type="entry name" value="30S ribosomal protein S15"/>
    <property type="match status" value="1"/>
</dbReference>
<dbReference type="Gene3D" id="6.10.250.3130">
    <property type="match status" value="1"/>
</dbReference>
<dbReference type="Gene3D" id="1.10.287.10">
    <property type="entry name" value="S15/NS1, RNA-binding"/>
    <property type="match status" value="1"/>
</dbReference>
<dbReference type="HAMAP" id="MF_01343_B">
    <property type="entry name" value="Ribosomal_uS15_B"/>
    <property type="match status" value="1"/>
</dbReference>
<dbReference type="InterPro" id="IPR000589">
    <property type="entry name" value="Ribosomal_uS15"/>
</dbReference>
<dbReference type="InterPro" id="IPR005290">
    <property type="entry name" value="Ribosomal_uS15_bac-type"/>
</dbReference>
<dbReference type="InterPro" id="IPR009068">
    <property type="entry name" value="uS15_NS1_RNA-bd_sf"/>
</dbReference>
<dbReference type="NCBIfam" id="TIGR00952">
    <property type="entry name" value="S15_bact"/>
    <property type="match status" value="1"/>
</dbReference>
<dbReference type="PANTHER" id="PTHR23321">
    <property type="entry name" value="RIBOSOMAL PROTEIN S15, BACTERIAL AND ORGANELLAR"/>
    <property type="match status" value="1"/>
</dbReference>
<dbReference type="PANTHER" id="PTHR23321:SF26">
    <property type="entry name" value="SMALL RIBOSOMAL SUBUNIT PROTEIN US15M"/>
    <property type="match status" value="1"/>
</dbReference>
<dbReference type="Pfam" id="PF00312">
    <property type="entry name" value="Ribosomal_S15"/>
    <property type="match status" value="1"/>
</dbReference>
<dbReference type="SMART" id="SM01387">
    <property type="entry name" value="Ribosomal_S15"/>
    <property type="match status" value="1"/>
</dbReference>
<dbReference type="SUPFAM" id="SSF47060">
    <property type="entry name" value="S15/NS1 RNA-binding domain"/>
    <property type="match status" value="1"/>
</dbReference>
<dbReference type="PROSITE" id="PS00362">
    <property type="entry name" value="RIBOSOMAL_S15"/>
    <property type="match status" value="1"/>
</dbReference>
<protein>
    <recommendedName>
        <fullName evidence="1">Small ribosomal subunit protein uS15</fullName>
    </recommendedName>
    <alternativeName>
        <fullName evidence="2">30S ribosomal protein S15</fullName>
    </alternativeName>
</protein>
<comment type="function">
    <text evidence="1">One of the primary rRNA binding proteins, it binds directly to 16S rRNA where it helps nucleate assembly of the platform of the 30S subunit by binding and bridging several RNA helices of the 16S rRNA.</text>
</comment>
<comment type="function">
    <text evidence="1">Forms an intersubunit bridge (bridge B4) with the 23S rRNA of the 50S subunit in the ribosome.</text>
</comment>
<comment type="subunit">
    <text evidence="1">Part of the 30S ribosomal subunit. Forms a bridge to the 50S subunit in the 70S ribosome, contacting the 23S rRNA.</text>
</comment>
<comment type="similarity">
    <text evidence="1">Belongs to the universal ribosomal protein uS15 family.</text>
</comment>